<gene>
    <name type="primary">MT-CYB</name>
    <name type="synonym">COB</name>
    <name type="synonym">CYTB</name>
    <name type="synonym">MTCYB</name>
</gene>
<keyword id="KW-0249">Electron transport</keyword>
<keyword id="KW-0349">Heme</keyword>
<keyword id="KW-0408">Iron</keyword>
<keyword id="KW-0472">Membrane</keyword>
<keyword id="KW-0479">Metal-binding</keyword>
<keyword id="KW-0496">Mitochondrion</keyword>
<keyword id="KW-0999">Mitochondrion inner membrane</keyword>
<keyword id="KW-0679">Respiratory chain</keyword>
<keyword id="KW-0812">Transmembrane</keyword>
<keyword id="KW-1133">Transmembrane helix</keyword>
<keyword id="KW-0813">Transport</keyword>
<keyword id="KW-0830">Ubiquinone</keyword>
<evidence type="ECO:0000250" key="1"/>
<evidence type="ECO:0000250" key="2">
    <source>
        <dbReference type="UniProtKB" id="P00157"/>
    </source>
</evidence>
<evidence type="ECO:0000255" key="3">
    <source>
        <dbReference type="PROSITE-ProRule" id="PRU00967"/>
    </source>
</evidence>
<evidence type="ECO:0000255" key="4">
    <source>
        <dbReference type="PROSITE-ProRule" id="PRU00968"/>
    </source>
</evidence>
<evidence type="ECO:0000305" key="5"/>
<name>CYB_PLAGN</name>
<comment type="function">
    <text evidence="2">Component of the ubiquinol-cytochrome c reductase complex (complex III or cytochrome b-c1 complex) that is part of the mitochondrial respiratory chain. The b-c1 complex mediates electron transfer from ubiquinol to cytochrome c. Contributes to the generation of a proton gradient across the mitochondrial membrane that is then used for ATP synthesis.</text>
</comment>
<comment type="cofactor">
    <cofactor evidence="2">
        <name>heme b</name>
        <dbReference type="ChEBI" id="CHEBI:60344"/>
    </cofactor>
    <text evidence="2">Binds 2 heme b groups non-covalently.</text>
</comment>
<comment type="subunit">
    <text evidence="2">The cytochrome bc1 complex contains 11 subunits: 3 respiratory subunits (MT-CYB, CYC1 and UQCRFS1), 2 core proteins (UQCRC1 and UQCRC2) and 6 low-molecular weight proteins (UQCRH/QCR6, UQCRB/QCR7, UQCRQ/QCR8, UQCR10/QCR9, UQCR11/QCR10 and a cleavage product of UQCRFS1). This cytochrome bc1 complex then forms a dimer.</text>
</comment>
<comment type="subcellular location">
    <subcellularLocation>
        <location evidence="2">Mitochondrion inner membrane</location>
        <topology evidence="2">Multi-pass membrane protein</topology>
    </subcellularLocation>
</comment>
<comment type="miscellaneous">
    <text evidence="1">Heme 1 (or BL or b562) is low-potential and absorbs at about 562 nm, and heme 2 (or BH or b566) is high-potential and absorbs at about 566 nm.</text>
</comment>
<comment type="similarity">
    <text evidence="3 4">Belongs to the cytochrome b family.</text>
</comment>
<comment type="caution">
    <text evidence="2">The full-length protein contains only eight transmembrane helices, not nine as predicted by bioinformatics tools.</text>
</comment>
<accession>Q9G7T9</accession>
<accession>Q9MI63</accession>
<reference key="1">
    <citation type="journal article" date="2000" name="Proc. Natl. Acad. Sci. U.S.A.">
        <title>Independent adaptation to riverine habitats allowed survival of ancient cetacean lineages.</title>
        <authorList>
            <person name="Cassens I."/>
            <person name="Vicario S."/>
            <person name="Waddell V.G."/>
            <person name="Balchowsky H."/>
            <person name="Van Belle D."/>
            <person name="Ding W."/>
            <person name="Fan C."/>
            <person name="Mohan L."/>
            <person name="Simoes-Lopes P.C."/>
            <person name="Bastida R."/>
            <person name="Meyer A."/>
            <person name="Stanhope M.J."/>
            <person name="Milinkovitch M.C."/>
        </authorList>
    </citation>
    <scope>NUCLEOTIDE SEQUENCE [GENOMIC DNA]</scope>
</reference>
<reference key="2">
    <citation type="submission" date="1999-06" db="EMBL/GenBank/DDBJ databases">
        <title>Molecular systematics of river dolphins inferred from complete mitochondrial cytochrome b gene sequences.</title>
        <authorList>
            <person name="Yang G."/>
            <person name="Zhou K."/>
            <person name="Bastida R."/>
            <person name="Rivero L."/>
        </authorList>
    </citation>
    <scope>NUCLEOTIDE SEQUENCE [GENOMIC DNA]</scope>
    <source>
        <strain>Isolate NJNU0384</strain>
    </source>
</reference>
<feature type="chain" id="PRO_0000254747" description="Cytochrome b">
    <location>
        <begin position="1"/>
        <end position="379"/>
    </location>
</feature>
<feature type="transmembrane region" description="Helical" evidence="2">
    <location>
        <begin position="33"/>
        <end position="53"/>
    </location>
</feature>
<feature type="transmembrane region" description="Helical" evidence="2">
    <location>
        <begin position="77"/>
        <end position="98"/>
    </location>
</feature>
<feature type="transmembrane region" description="Helical" evidence="2">
    <location>
        <begin position="113"/>
        <end position="133"/>
    </location>
</feature>
<feature type="transmembrane region" description="Helical" evidence="2">
    <location>
        <begin position="178"/>
        <end position="198"/>
    </location>
</feature>
<feature type="transmembrane region" description="Helical" evidence="2">
    <location>
        <begin position="226"/>
        <end position="246"/>
    </location>
</feature>
<feature type="transmembrane region" description="Helical" evidence="2">
    <location>
        <begin position="288"/>
        <end position="308"/>
    </location>
</feature>
<feature type="transmembrane region" description="Helical" evidence="2">
    <location>
        <begin position="320"/>
        <end position="340"/>
    </location>
</feature>
<feature type="transmembrane region" description="Helical" evidence="2">
    <location>
        <begin position="347"/>
        <end position="367"/>
    </location>
</feature>
<feature type="binding site" description="axial binding residue" evidence="2">
    <location>
        <position position="83"/>
    </location>
    <ligand>
        <name>heme b</name>
        <dbReference type="ChEBI" id="CHEBI:60344"/>
        <label>b562</label>
    </ligand>
    <ligandPart>
        <name>Fe</name>
        <dbReference type="ChEBI" id="CHEBI:18248"/>
    </ligandPart>
</feature>
<feature type="binding site" description="axial binding residue" evidence="2">
    <location>
        <position position="97"/>
    </location>
    <ligand>
        <name>heme b</name>
        <dbReference type="ChEBI" id="CHEBI:60344"/>
        <label>b566</label>
    </ligand>
    <ligandPart>
        <name>Fe</name>
        <dbReference type="ChEBI" id="CHEBI:18248"/>
    </ligandPart>
</feature>
<feature type="binding site" description="axial binding residue" evidence="2">
    <location>
        <position position="182"/>
    </location>
    <ligand>
        <name>heme b</name>
        <dbReference type="ChEBI" id="CHEBI:60344"/>
        <label>b562</label>
    </ligand>
    <ligandPart>
        <name>Fe</name>
        <dbReference type="ChEBI" id="CHEBI:18248"/>
    </ligandPart>
</feature>
<feature type="binding site" description="axial binding residue" evidence="2">
    <location>
        <position position="196"/>
    </location>
    <ligand>
        <name>heme b</name>
        <dbReference type="ChEBI" id="CHEBI:60344"/>
        <label>b566</label>
    </ligand>
    <ligandPart>
        <name>Fe</name>
        <dbReference type="ChEBI" id="CHEBI:18248"/>
    </ligandPart>
</feature>
<feature type="binding site" evidence="2">
    <location>
        <position position="201"/>
    </location>
    <ligand>
        <name>a ubiquinone</name>
        <dbReference type="ChEBI" id="CHEBI:16389"/>
    </ligand>
</feature>
<feature type="sequence conflict" description="In Ref. 2; AAF75128." evidence="5" ref="2">
    <original>V</original>
    <variation>A</variation>
    <location>
        <position position="11"/>
    </location>
</feature>
<feature type="sequence conflict" description="In Ref. 2; AAF75128." evidence="5" ref="2">
    <original>I</original>
    <variation>V</variation>
    <location>
        <position position="194"/>
    </location>
</feature>
<feature type="sequence conflict" description="In Ref. 2; AAF75128." evidence="5" ref="2">
    <original>D</original>
    <variation>N</variation>
    <location>
        <position position="214"/>
    </location>
</feature>
<feature type="sequence conflict" description="In Ref. 2; AAF75128." evidence="5" ref="2">
    <original>L</original>
    <variation>P</variation>
    <location>
        <position position="350"/>
    </location>
</feature>
<protein>
    <recommendedName>
        <fullName>Cytochrome b</fullName>
    </recommendedName>
    <alternativeName>
        <fullName>Complex III subunit 3</fullName>
    </alternativeName>
    <alternativeName>
        <fullName>Complex III subunit III</fullName>
    </alternativeName>
    <alternativeName>
        <fullName>Cytochrome b-c1 complex subunit 3</fullName>
    </alternativeName>
    <alternativeName>
        <fullName>Ubiquinol-cytochrome-c reductase complex cytochrome b subunit</fullName>
    </alternativeName>
</protein>
<organism>
    <name type="scientific">Platanista gangetica</name>
    <name type="common">Ganges river dolphin</name>
    <name type="synonym">Platanista gangetica subsp. gangetica</name>
    <dbReference type="NCBI Taxonomy" id="118798"/>
    <lineage>
        <taxon>Eukaryota</taxon>
        <taxon>Metazoa</taxon>
        <taxon>Chordata</taxon>
        <taxon>Craniata</taxon>
        <taxon>Vertebrata</taxon>
        <taxon>Euteleostomi</taxon>
        <taxon>Mammalia</taxon>
        <taxon>Eutheria</taxon>
        <taxon>Laurasiatheria</taxon>
        <taxon>Artiodactyla</taxon>
        <taxon>Whippomorpha</taxon>
        <taxon>Cetacea</taxon>
        <taxon>Odontoceti</taxon>
        <taxon>Platanistidae</taxon>
        <taxon>Platanista</taxon>
    </lineage>
</organism>
<geneLocation type="mitochondrion"/>
<dbReference type="EMBL" id="AF304070">
    <property type="protein sequence ID" value="AAG30913.1"/>
    <property type="molecule type" value="Genomic_DNA"/>
</dbReference>
<dbReference type="EMBL" id="AF158376">
    <property type="protein sequence ID" value="AAF75128.1"/>
    <property type="molecule type" value="Genomic_DNA"/>
</dbReference>
<dbReference type="SMR" id="Q9G7T9"/>
<dbReference type="GO" id="GO:0005743">
    <property type="term" value="C:mitochondrial inner membrane"/>
    <property type="evidence" value="ECO:0007669"/>
    <property type="project" value="UniProtKB-SubCell"/>
</dbReference>
<dbReference type="GO" id="GO:0045275">
    <property type="term" value="C:respiratory chain complex III"/>
    <property type="evidence" value="ECO:0007669"/>
    <property type="project" value="InterPro"/>
</dbReference>
<dbReference type="GO" id="GO:0046872">
    <property type="term" value="F:metal ion binding"/>
    <property type="evidence" value="ECO:0007669"/>
    <property type="project" value="UniProtKB-KW"/>
</dbReference>
<dbReference type="GO" id="GO:0008121">
    <property type="term" value="F:ubiquinol-cytochrome-c reductase activity"/>
    <property type="evidence" value="ECO:0007669"/>
    <property type="project" value="InterPro"/>
</dbReference>
<dbReference type="GO" id="GO:0006122">
    <property type="term" value="P:mitochondrial electron transport, ubiquinol to cytochrome c"/>
    <property type="evidence" value="ECO:0007669"/>
    <property type="project" value="TreeGrafter"/>
</dbReference>
<dbReference type="CDD" id="cd00290">
    <property type="entry name" value="cytochrome_b_C"/>
    <property type="match status" value="1"/>
</dbReference>
<dbReference type="CDD" id="cd00284">
    <property type="entry name" value="Cytochrome_b_N"/>
    <property type="match status" value="1"/>
</dbReference>
<dbReference type="FunFam" id="1.20.810.10:FF:000002">
    <property type="entry name" value="Cytochrome b"/>
    <property type="match status" value="1"/>
</dbReference>
<dbReference type="Gene3D" id="1.20.810.10">
    <property type="entry name" value="Cytochrome Bc1 Complex, Chain C"/>
    <property type="match status" value="1"/>
</dbReference>
<dbReference type="InterPro" id="IPR005798">
    <property type="entry name" value="Cyt_b/b6_C"/>
</dbReference>
<dbReference type="InterPro" id="IPR036150">
    <property type="entry name" value="Cyt_b/b6_C_sf"/>
</dbReference>
<dbReference type="InterPro" id="IPR005797">
    <property type="entry name" value="Cyt_b/b6_N"/>
</dbReference>
<dbReference type="InterPro" id="IPR027387">
    <property type="entry name" value="Cytb/b6-like_sf"/>
</dbReference>
<dbReference type="InterPro" id="IPR030689">
    <property type="entry name" value="Cytochrome_b"/>
</dbReference>
<dbReference type="InterPro" id="IPR048260">
    <property type="entry name" value="Cytochrome_b_C_euk/bac"/>
</dbReference>
<dbReference type="InterPro" id="IPR048259">
    <property type="entry name" value="Cytochrome_b_N_euk/bac"/>
</dbReference>
<dbReference type="InterPro" id="IPR016174">
    <property type="entry name" value="Di-haem_cyt_TM"/>
</dbReference>
<dbReference type="PANTHER" id="PTHR19271">
    <property type="entry name" value="CYTOCHROME B"/>
    <property type="match status" value="1"/>
</dbReference>
<dbReference type="PANTHER" id="PTHR19271:SF16">
    <property type="entry name" value="CYTOCHROME B"/>
    <property type="match status" value="1"/>
</dbReference>
<dbReference type="Pfam" id="PF00032">
    <property type="entry name" value="Cytochrom_B_C"/>
    <property type="match status" value="1"/>
</dbReference>
<dbReference type="Pfam" id="PF00033">
    <property type="entry name" value="Cytochrome_B"/>
    <property type="match status" value="1"/>
</dbReference>
<dbReference type="PIRSF" id="PIRSF038885">
    <property type="entry name" value="COB"/>
    <property type="match status" value="1"/>
</dbReference>
<dbReference type="SUPFAM" id="SSF81648">
    <property type="entry name" value="a domain/subunit of cytochrome bc1 complex (Ubiquinol-cytochrome c reductase)"/>
    <property type="match status" value="1"/>
</dbReference>
<dbReference type="SUPFAM" id="SSF81342">
    <property type="entry name" value="Transmembrane di-heme cytochromes"/>
    <property type="match status" value="1"/>
</dbReference>
<dbReference type="PROSITE" id="PS51003">
    <property type="entry name" value="CYTB_CTER"/>
    <property type="match status" value="1"/>
</dbReference>
<dbReference type="PROSITE" id="PS51002">
    <property type="entry name" value="CYTB_NTER"/>
    <property type="match status" value="1"/>
</dbReference>
<proteinExistence type="inferred from homology"/>
<sequence>MTNIRKTHPLVKIINNTFIDLPTPSNISSWWNFGSLLGLCLIMQILTGLFLAMHYTPDTTTAFSSVTHICRDVNYGWLIRYLHANGASMFFICLYAHVGRALYYGSYTFQETWNIGILLLFTLMATAFVGYVLPWGQMSFWGATVITNLLSAIPYIGSTLVEWIWGGFSVDKATLTRFFAFHFILPFIILTLAIIHLLFLHETGSNNPTGIPSDTDKIPFHPYYTIKDTLGALILILTSLTLTLFTPDLLGDPDNYTPANPLNTPAHIKPEWYFLFAYAILRSIPNKLGGVLALLLSILVLAFIPMLHTSKQRSMMFRPFSQLLFWMLVADFLTLTWIGGQPVEHPYMLLGQLASILYFLLILVLMPTASLIENKLLKW</sequence>